<comment type="function">
    <text evidence="1">Histone chaperone that facilitates histone deposition and histone exchange and removal during nucleosome assembly and disassembly.</text>
</comment>
<comment type="subunit">
    <text evidence="1">Interacts with histone H3 and histone H4.</text>
</comment>
<comment type="subcellular location">
    <subcellularLocation>
        <location evidence="1">Nucleus</location>
    </subcellularLocation>
</comment>
<comment type="similarity">
    <text evidence="4">Belongs to the ASF1 family.</text>
</comment>
<gene>
    <name type="primary">ASF1</name>
    <name type="ordered locus">ADR320C</name>
</gene>
<reference key="1">
    <citation type="journal article" date="2004" name="Science">
        <title>The Ashbya gossypii genome as a tool for mapping the ancient Saccharomyces cerevisiae genome.</title>
        <authorList>
            <person name="Dietrich F.S."/>
            <person name="Voegeli S."/>
            <person name="Brachat S."/>
            <person name="Lerch A."/>
            <person name="Gates K."/>
            <person name="Steiner S."/>
            <person name="Mohr C."/>
            <person name="Poehlmann R."/>
            <person name="Luedi P."/>
            <person name="Choi S."/>
            <person name="Wing R.A."/>
            <person name="Flavier A."/>
            <person name="Gaffney T.D."/>
            <person name="Philippsen P."/>
        </authorList>
    </citation>
    <scope>NUCLEOTIDE SEQUENCE [LARGE SCALE GENOMIC DNA]</scope>
    <source>
        <strain>ATCC 10895 / CBS 109.51 / FGSC 9923 / NRRL Y-1056</strain>
    </source>
</reference>
<reference key="2">
    <citation type="journal article" date="2013" name="G3 (Bethesda)">
        <title>Genomes of Ashbya fungi isolated from insects reveal four mating-type loci, numerous translocations, lack of transposons, and distinct gene duplications.</title>
        <authorList>
            <person name="Dietrich F.S."/>
            <person name="Voegeli S."/>
            <person name="Kuo S."/>
            <person name="Philippsen P."/>
        </authorList>
    </citation>
    <scope>GENOME REANNOTATION</scope>
    <scope>SEQUENCE REVISION TO 62; 71-74; 138 AND 154-155</scope>
    <source>
        <strain>ATCC 10895 / CBS 109.51 / FGSC 9923 / NRRL Y-1056</strain>
    </source>
</reference>
<protein>
    <recommendedName>
        <fullName>Histone chaperone ASF1</fullName>
    </recommendedName>
    <alternativeName>
        <fullName>Anti-silencing function protein 1</fullName>
    </alternativeName>
</protein>
<sequence>MSIVSLLGVKVVNNPAKFTDPYEFEITFECLEPLKHDLEWKLTYVGSSRSLEHDQELDSILVGPIPVGVNKFLFTADPPSAELIPASELVSVTVILLSCSYDGREFVRVGYYVNNEYDTEELRNDPPQKVQVDHVVRNILAEKPRVTRFNIVWDNEAEDEYPPEQPGVDDEEVDDEDEDEDEDEEGADEEGADEEGASDGPDAKKRKVQTEDEEDDEAEEIDLEAEEEEDEDEEDEDGDEAEEVDEEEEDDDGEPVGASEGGADTVPTPQDTTESK</sequence>
<evidence type="ECO:0000250" key="1"/>
<evidence type="ECO:0000255" key="2"/>
<evidence type="ECO:0000256" key="3">
    <source>
        <dbReference type="SAM" id="MobiDB-lite"/>
    </source>
</evidence>
<evidence type="ECO:0000305" key="4"/>
<accession>Q759F6</accession>
<dbReference type="EMBL" id="AE016817">
    <property type="protein sequence ID" value="AAS52240.2"/>
    <property type="molecule type" value="Genomic_DNA"/>
</dbReference>
<dbReference type="RefSeq" id="NP_984416.2">
    <property type="nucleotide sequence ID" value="NM_209769.2"/>
</dbReference>
<dbReference type="SMR" id="Q759F6"/>
<dbReference type="FunCoup" id="Q759F6">
    <property type="interactions" value="911"/>
</dbReference>
<dbReference type="STRING" id="284811.Q759F6"/>
<dbReference type="EnsemblFungi" id="AAS52240">
    <property type="protein sequence ID" value="AAS52240"/>
    <property type="gene ID" value="AGOS_ADR320C"/>
</dbReference>
<dbReference type="GeneID" id="4620582"/>
<dbReference type="KEGG" id="ago:AGOS_ADR320C"/>
<dbReference type="eggNOG" id="KOG3265">
    <property type="taxonomic scope" value="Eukaryota"/>
</dbReference>
<dbReference type="HOGENOM" id="CLU_060354_0_2_1"/>
<dbReference type="InParanoid" id="Q759F6"/>
<dbReference type="OMA" id="CSYDERE"/>
<dbReference type="OrthoDB" id="29755at2759"/>
<dbReference type="Proteomes" id="UP000000591">
    <property type="component" value="Chromosome IV"/>
</dbReference>
<dbReference type="GO" id="GO:0000785">
    <property type="term" value="C:chromatin"/>
    <property type="evidence" value="ECO:0000318"/>
    <property type="project" value="GO_Central"/>
</dbReference>
<dbReference type="GO" id="GO:0000781">
    <property type="term" value="C:chromosome, telomeric region"/>
    <property type="evidence" value="ECO:0007669"/>
    <property type="project" value="GOC"/>
</dbReference>
<dbReference type="GO" id="GO:0005829">
    <property type="term" value="C:cytosol"/>
    <property type="evidence" value="ECO:0007669"/>
    <property type="project" value="EnsemblFungi"/>
</dbReference>
<dbReference type="GO" id="GO:0070775">
    <property type="term" value="C:H3 histone acetyltransferase complex"/>
    <property type="evidence" value="ECO:0007669"/>
    <property type="project" value="EnsemblFungi"/>
</dbReference>
<dbReference type="GO" id="GO:0005634">
    <property type="term" value="C:nucleus"/>
    <property type="evidence" value="ECO:0000318"/>
    <property type="project" value="GO_Central"/>
</dbReference>
<dbReference type="GO" id="GO:0010698">
    <property type="term" value="F:acetyltransferase activator activity"/>
    <property type="evidence" value="ECO:0007669"/>
    <property type="project" value="EnsemblFungi"/>
</dbReference>
<dbReference type="GO" id="GO:0042393">
    <property type="term" value="F:histone binding"/>
    <property type="evidence" value="ECO:0000318"/>
    <property type="project" value="GO_Central"/>
</dbReference>
<dbReference type="GO" id="GO:0033554">
    <property type="term" value="P:cellular response to stress"/>
    <property type="evidence" value="ECO:0007669"/>
    <property type="project" value="EnsemblFungi"/>
</dbReference>
<dbReference type="GO" id="GO:0006335">
    <property type="term" value="P:DNA replication-dependent chromatin assembly"/>
    <property type="evidence" value="ECO:0000318"/>
    <property type="project" value="GO_Central"/>
</dbReference>
<dbReference type="GO" id="GO:0006334">
    <property type="term" value="P:nucleosome assembly"/>
    <property type="evidence" value="ECO:0007669"/>
    <property type="project" value="InterPro"/>
</dbReference>
<dbReference type="GO" id="GO:0006337">
    <property type="term" value="P:nucleosome disassembly"/>
    <property type="evidence" value="ECO:0007669"/>
    <property type="project" value="EnsemblFungi"/>
</dbReference>
<dbReference type="GO" id="GO:0032968">
    <property type="term" value="P:positive regulation of transcription elongation by RNA polymerase II"/>
    <property type="evidence" value="ECO:0007669"/>
    <property type="project" value="EnsemblFungi"/>
</dbReference>
<dbReference type="GO" id="GO:0036211">
    <property type="term" value="P:protein modification process"/>
    <property type="evidence" value="ECO:0007669"/>
    <property type="project" value="EnsemblFungi"/>
</dbReference>
<dbReference type="GO" id="GO:0030466">
    <property type="term" value="P:silent mating-type cassette heterochromatin formation"/>
    <property type="evidence" value="ECO:0007669"/>
    <property type="project" value="EnsemblFungi"/>
</dbReference>
<dbReference type="GO" id="GO:0031509">
    <property type="term" value="P:subtelomeric heterochromatin formation"/>
    <property type="evidence" value="ECO:0007669"/>
    <property type="project" value="EnsemblFungi"/>
</dbReference>
<dbReference type="FunFam" id="2.60.40.1490:FF:000001">
    <property type="entry name" value="Histone chaperone ASF1"/>
    <property type="match status" value="1"/>
</dbReference>
<dbReference type="Gene3D" id="2.60.40.1490">
    <property type="entry name" value="Histone chaperone ASF1-like"/>
    <property type="match status" value="1"/>
</dbReference>
<dbReference type="InterPro" id="IPR006818">
    <property type="entry name" value="ASF1-like"/>
</dbReference>
<dbReference type="InterPro" id="IPR036747">
    <property type="entry name" value="ASF1-like_sf"/>
</dbReference>
<dbReference type="InterPro" id="IPR017282">
    <property type="entry name" value="Hist_deposition_Asf1"/>
</dbReference>
<dbReference type="PANTHER" id="PTHR12040">
    <property type="entry name" value="ANTI-SILENCING PROTEIN 1"/>
    <property type="match status" value="1"/>
</dbReference>
<dbReference type="PANTHER" id="PTHR12040:SF0">
    <property type="entry name" value="HISTONE CHAPERONE ASF1"/>
    <property type="match status" value="1"/>
</dbReference>
<dbReference type="Pfam" id="PF04729">
    <property type="entry name" value="ASF1_hist_chap"/>
    <property type="match status" value="1"/>
</dbReference>
<dbReference type="PIRSF" id="PIRSF037759">
    <property type="entry name" value="Histone_Asf1"/>
    <property type="match status" value="1"/>
</dbReference>
<dbReference type="SUPFAM" id="SSF101546">
    <property type="entry name" value="ASF1-like"/>
    <property type="match status" value="1"/>
</dbReference>
<proteinExistence type="inferred from homology"/>
<feature type="chain" id="PRO_0000284026" description="Histone chaperone ASF1">
    <location>
        <begin position="1"/>
        <end position="276"/>
    </location>
</feature>
<feature type="region of interest" description="Disordered" evidence="3">
    <location>
        <begin position="151"/>
        <end position="276"/>
    </location>
</feature>
<feature type="coiled-coil region" evidence="2">
    <location>
        <begin position="202"/>
        <end position="243"/>
    </location>
</feature>
<feature type="compositionally biased region" description="Acidic residues" evidence="3">
    <location>
        <begin position="155"/>
        <end position="197"/>
    </location>
</feature>
<feature type="compositionally biased region" description="Acidic residues" evidence="3">
    <location>
        <begin position="211"/>
        <end position="254"/>
    </location>
</feature>
<feature type="compositionally biased region" description="Polar residues" evidence="3">
    <location>
        <begin position="267"/>
        <end position="276"/>
    </location>
</feature>
<organism>
    <name type="scientific">Eremothecium gossypii (strain ATCC 10895 / CBS 109.51 / FGSC 9923 / NRRL Y-1056)</name>
    <name type="common">Yeast</name>
    <name type="synonym">Ashbya gossypii</name>
    <dbReference type="NCBI Taxonomy" id="284811"/>
    <lineage>
        <taxon>Eukaryota</taxon>
        <taxon>Fungi</taxon>
        <taxon>Dikarya</taxon>
        <taxon>Ascomycota</taxon>
        <taxon>Saccharomycotina</taxon>
        <taxon>Saccharomycetes</taxon>
        <taxon>Saccharomycetales</taxon>
        <taxon>Saccharomycetaceae</taxon>
        <taxon>Eremothecium</taxon>
    </lineage>
</organism>
<name>ASF1_EREGS</name>
<keyword id="KW-0143">Chaperone</keyword>
<keyword id="KW-0156">Chromatin regulator</keyword>
<keyword id="KW-0175">Coiled coil</keyword>
<keyword id="KW-0539">Nucleus</keyword>
<keyword id="KW-1185">Reference proteome</keyword>
<keyword id="KW-0804">Transcription</keyword>
<keyword id="KW-0805">Transcription regulation</keyword>